<keyword id="KW-1185">Reference proteome</keyword>
<proteinExistence type="predicted"/>
<organismHost>
    <name type="scientific">Acanthamoeba polyphaga</name>
    <name type="common">Amoeba</name>
    <dbReference type="NCBI Taxonomy" id="5757"/>
</organismHost>
<dbReference type="EMBL" id="AY653733">
    <property type="protein sequence ID" value="AAV50648.1"/>
    <property type="molecule type" value="Genomic_DNA"/>
</dbReference>
<dbReference type="KEGG" id="vg:9925000"/>
<dbReference type="OrthoDB" id="13821at10239"/>
<dbReference type="Proteomes" id="UP000001134">
    <property type="component" value="Genome"/>
</dbReference>
<accession>Q5UQV8</accession>
<sequence>MAKINLRSIFCHLVNDDKFLSVVVEDDHSTGSSKVKKNSNKNKINIMANMVSEYVTLSPYETQGYALLPHNIKCLLTPDYQRLGINGKMVKHFEPINISFLHSLNILLRPEIYYLNFEEHTKNYSLLEGFLSHMIQRNYQIDKIKNTKKVQAVNKELIKNLSEGKISHDLIQYIVNIFEINLLVFDFAKMDILLYWSKGTKYPYFNLFKDIYCMSYIYGNYEPITCLQNNISEQQKRKMYTYILTNLDNIKTIQQIQLSAPTLLYLSTWDFCVTDIEKIYETFFRNKNSKEILEDVINNSNICN</sequence>
<name>YR379_MIMIV</name>
<reference key="1">
    <citation type="journal article" date="2004" name="Science">
        <title>The 1.2-megabase genome sequence of Mimivirus.</title>
        <authorList>
            <person name="Raoult D."/>
            <person name="Audic S."/>
            <person name="Robert C."/>
            <person name="Abergel C."/>
            <person name="Renesto P."/>
            <person name="Ogata H."/>
            <person name="La Scola B."/>
            <person name="Susan M."/>
            <person name="Claverie J.-M."/>
        </authorList>
    </citation>
    <scope>NUCLEOTIDE SEQUENCE [LARGE SCALE GENOMIC DNA]</scope>
    <source>
        <strain>Rowbotham-Bradford</strain>
    </source>
</reference>
<protein>
    <recommendedName>
        <fullName>Uncharacterized protein R379</fullName>
    </recommendedName>
</protein>
<organism>
    <name type="scientific">Acanthamoeba polyphaga mimivirus</name>
    <name type="common">APMV</name>
    <dbReference type="NCBI Taxonomy" id="212035"/>
    <lineage>
        <taxon>Viruses</taxon>
        <taxon>Varidnaviria</taxon>
        <taxon>Bamfordvirae</taxon>
        <taxon>Nucleocytoviricota</taxon>
        <taxon>Megaviricetes</taxon>
        <taxon>Imitervirales</taxon>
        <taxon>Mimiviridae</taxon>
        <taxon>Megamimivirinae</taxon>
        <taxon>Mimivirus</taxon>
        <taxon>Mimivirus bradfordmassiliense</taxon>
    </lineage>
</organism>
<feature type="chain" id="PRO_0000244041" description="Uncharacterized protein R379">
    <location>
        <begin position="1"/>
        <end position="304"/>
    </location>
</feature>
<gene>
    <name type="ordered locus">MIMI_R379</name>
</gene>